<feature type="chain" id="PRO_0000319835" description="3-isopropylmalate dehydratase large subunit">
    <location>
        <begin position="1"/>
        <end position="472"/>
    </location>
</feature>
<feature type="binding site" evidence="1">
    <location>
        <position position="349"/>
    </location>
    <ligand>
        <name>[4Fe-4S] cluster</name>
        <dbReference type="ChEBI" id="CHEBI:49883"/>
    </ligand>
</feature>
<feature type="binding site" evidence="1">
    <location>
        <position position="409"/>
    </location>
    <ligand>
        <name>[4Fe-4S] cluster</name>
        <dbReference type="ChEBI" id="CHEBI:49883"/>
    </ligand>
</feature>
<feature type="binding site" evidence="1">
    <location>
        <position position="412"/>
    </location>
    <ligand>
        <name>[4Fe-4S] cluster</name>
        <dbReference type="ChEBI" id="CHEBI:49883"/>
    </ligand>
</feature>
<dbReference type="EC" id="4.2.1.33" evidence="1"/>
<dbReference type="EMBL" id="CP000230">
    <property type="protein sequence ID" value="ABC21990.1"/>
    <property type="molecule type" value="Genomic_DNA"/>
</dbReference>
<dbReference type="RefSeq" id="WP_011388944.1">
    <property type="nucleotide sequence ID" value="NC_007643.1"/>
</dbReference>
<dbReference type="RefSeq" id="YP_426277.1">
    <property type="nucleotide sequence ID" value="NC_007643.1"/>
</dbReference>
<dbReference type="SMR" id="Q2RV55"/>
<dbReference type="STRING" id="269796.Rru_A1189"/>
<dbReference type="EnsemblBacteria" id="ABC21990">
    <property type="protein sequence ID" value="ABC21990"/>
    <property type="gene ID" value="Rru_A1189"/>
</dbReference>
<dbReference type="KEGG" id="rru:Rru_A1189"/>
<dbReference type="PATRIC" id="fig|269796.9.peg.1253"/>
<dbReference type="eggNOG" id="COG0065">
    <property type="taxonomic scope" value="Bacteria"/>
</dbReference>
<dbReference type="HOGENOM" id="CLU_006714_3_4_5"/>
<dbReference type="PhylomeDB" id="Q2RV55"/>
<dbReference type="UniPathway" id="UPA00048">
    <property type="reaction ID" value="UER00071"/>
</dbReference>
<dbReference type="Proteomes" id="UP000001929">
    <property type="component" value="Chromosome"/>
</dbReference>
<dbReference type="GO" id="GO:0003861">
    <property type="term" value="F:3-isopropylmalate dehydratase activity"/>
    <property type="evidence" value="ECO:0007669"/>
    <property type="project" value="UniProtKB-UniRule"/>
</dbReference>
<dbReference type="GO" id="GO:0051539">
    <property type="term" value="F:4 iron, 4 sulfur cluster binding"/>
    <property type="evidence" value="ECO:0007669"/>
    <property type="project" value="UniProtKB-KW"/>
</dbReference>
<dbReference type="GO" id="GO:0046872">
    <property type="term" value="F:metal ion binding"/>
    <property type="evidence" value="ECO:0007669"/>
    <property type="project" value="UniProtKB-KW"/>
</dbReference>
<dbReference type="GO" id="GO:0009098">
    <property type="term" value="P:L-leucine biosynthetic process"/>
    <property type="evidence" value="ECO:0007669"/>
    <property type="project" value="UniProtKB-UniRule"/>
</dbReference>
<dbReference type="CDD" id="cd01583">
    <property type="entry name" value="IPMI"/>
    <property type="match status" value="1"/>
</dbReference>
<dbReference type="FunFam" id="3.30.499.10:FF:000006">
    <property type="entry name" value="3-isopropylmalate dehydratase large subunit"/>
    <property type="match status" value="1"/>
</dbReference>
<dbReference type="FunFam" id="3.30.499.10:FF:000007">
    <property type="entry name" value="3-isopropylmalate dehydratase large subunit"/>
    <property type="match status" value="1"/>
</dbReference>
<dbReference type="Gene3D" id="3.30.499.10">
    <property type="entry name" value="Aconitase, domain 3"/>
    <property type="match status" value="2"/>
</dbReference>
<dbReference type="HAMAP" id="MF_01026">
    <property type="entry name" value="LeuC_type1"/>
    <property type="match status" value="1"/>
</dbReference>
<dbReference type="InterPro" id="IPR004430">
    <property type="entry name" value="3-IsopropMal_deHydase_lsu"/>
</dbReference>
<dbReference type="InterPro" id="IPR015931">
    <property type="entry name" value="Acnase/IPM_dHydase_lsu_aba_1/3"/>
</dbReference>
<dbReference type="InterPro" id="IPR001030">
    <property type="entry name" value="Acoase/IPM_deHydtase_lsu_aba"/>
</dbReference>
<dbReference type="InterPro" id="IPR018136">
    <property type="entry name" value="Aconitase_4Fe-4S_BS"/>
</dbReference>
<dbReference type="InterPro" id="IPR036008">
    <property type="entry name" value="Aconitase_4Fe-4S_dom"/>
</dbReference>
<dbReference type="InterPro" id="IPR050067">
    <property type="entry name" value="IPM_dehydratase_rel_enz"/>
</dbReference>
<dbReference type="InterPro" id="IPR033941">
    <property type="entry name" value="IPMI_cat"/>
</dbReference>
<dbReference type="NCBIfam" id="TIGR00170">
    <property type="entry name" value="leuC"/>
    <property type="match status" value="1"/>
</dbReference>
<dbReference type="NCBIfam" id="NF004016">
    <property type="entry name" value="PRK05478.1"/>
    <property type="match status" value="1"/>
</dbReference>
<dbReference type="NCBIfam" id="NF009116">
    <property type="entry name" value="PRK12466.1"/>
    <property type="match status" value="1"/>
</dbReference>
<dbReference type="PANTHER" id="PTHR43822:SF9">
    <property type="entry name" value="3-ISOPROPYLMALATE DEHYDRATASE"/>
    <property type="match status" value="1"/>
</dbReference>
<dbReference type="PANTHER" id="PTHR43822">
    <property type="entry name" value="HOMOACONITASE, MITOCHONDRIAL-RELATED"/>
    <property type="match status" value="1"/>
</dbReference>
<dbReference type="Pfam" id="PF00330">
    <property type="entry name" value="Aconitase"/>
    <property type="match status" value="1"/>
</dbReference>
<dbReference type="PRINTS" id="PR00415">
    <property type="entry name" value="ACONITASE"/>
</dbReference>
<dbReference type="SUPFAM" id="SSF53732">
    <property type="entry name" value="Aconitase iron-sulfur domain"/>
    <property type="match status" value="1"/>
</dbReference>
<dbReference type="PROSITE" id="PS00450">
    <property type="entry name" value="ACONITASE_1"/>
    <property type="match status" value="1"/>
</dbReference>
<dbReference type="PROSITE" id="PS01244">
    <property type="entry name" value="ACONITASE_2"/>
    <property type="match status" value="1"/>
</dbReference>
<gene>
    <name evidence="1" type="primary">leuC</name>
    <name type="ordered locus">Rru_A1189</name>
</gene>
<comment type="function">
    <text evidence="1">Catalyzes the isomerization between 2-isopropylmalate and 3-isopropylmalate, via the formation of 2-isopropylmaleate.</text>
</comment>
<comment type="catalytic activity">
    <reaction evidence="1">
        <text>(2R,3S)-3-isopropylmalate = (2S)-2-isopropylmalate</text>
        <dbReference type="Rhea" id="RHEA:32287"/>
        <dbReference type="ChEBI" id="CHEBI:1178"/>
        <dbReference type="ChEBI" id="CHEBI:35121"/>
        <dbReference type="EC" id="4.2.1.33"/>
    </reaction>
</comment>
<comment type="cofactor">
    <cofactor evidence="1">
        <name>[4Fe-4S] cluster</name>
        <dbReference type="ChEBI" id="CHEBI:49883"/>
    </cofactor>
    <text evidence="1">Binds 1 [4Fe-4S] cluster per subunit.</text>
</comment>
<comment type="pathway">
    <text evidence="1">Amino-acid biosynthesis; L-leucine biosynthesis; L-leucine from 3-methyl-2-oxobutanoate: step 2/4.</text>
</comment>
<comment type="subunit">
    <text evidence="1">Heterodimer of LeuC and LeuD.</text>
</comment>
<comment type="similarity">
    <text evidence="1">Belongs to the aconitase/IPM isomerase family. LeuC type 1 subfamily.</text>
</comment>
<sequence>MGKPKTLFNKIWQSHLVDVQDDGTCLIYIDRHLVHEVTSPQAFEGLRMTGRKVRRPEQTLAVADHNVPTTDRSKGIADEESRIQVEALGSNTAEFGVPYLEMDDIRQGIVHIVGPEQGFTLPGATIVCGDSHTSTHGAFGALAFGIGTSEVEHVLATQTLLQKPAKDMLVRIDGALRPGVSAKDIVLAVIGRIGTAGGTGHVIEFAGEAIRGLSMEGRMTVCNMTIEGGARAGLIAPDEVTFEYLKGRPFAPKGAAWEAAISYWKTLKTDEGAVYDTVIEMDAGAIEPQVTWGTSPENVVALSGRVPDPAAEADPGRRAAIERALAYMDLKPGMPMTEVAIDKVFIGSCTNGRIEDLRAAAAIAKGRKVAATVNAIVVPGSGLVKEQAESEGLDQIFLEAGFEWREPGCSMCLAMNADKLAPGERCASTSNRNFEGRQGKGGRTHLVSPAVAVASAITGKLTDAQSLAPSLG</sequence>
<organism>
    <name type="scientific">Rhodospirillum rubrum (strain ATCC 11170 / ATH 1.1.1 / DSM 467 / LMG 4362 / NCIMB 8255 / S1)</name>
    <dbReference type="NCBI Taxonomy" id="269796"/>
    <lineage>
        <taxon>Bacteria</taxon>
        <taxon>Pseudomonadati</taxon>
        <taxon>Pseudomonadota</taxon>
        <taxon>Alphaproteobacteria</taxon>
        <taxon>Rhodospirillales</taxon>
        <taxon>Rhodospirillaceae</taxon>
        <taxon>Rhodospirillum</taxon>
    </lineage>
</organism>
<evidence type="ECO:0000255" key="1">
    <source>
        <dbReference type="HAMAP-Rule" id="MF_01026"/>
    </source>
</evidence>
<accession>Q2RV55</accession>
<proteinExistence type="inferred from homology"/>
<reference key="1">
    <citation type="journal article" date="2011" name="Stand. Genomic Sci.">
        <title>Complete genome sequence of Rhodospirillum rubrum type strain (S1).</title>
        <authorList>
            <person name="Munk A.C."/>
            <person name="Copeland A."/>
            <person name="Lucas S."/>
            <person name="Lapidus A."/>
            <person name="Del Rio T.G."/>
            <person name="Barry K."/>
            <person name="Detter J.C."/>
            <person name="Hammon N."/>
            <person name="Israni S."/>
            <person name="Pitluck S."/>
            <person name="Brettin T."/>
            <person name="Bruce D."/>
            <person name="Han C."/>
            <person name="Tapia R."/>
            <person name="Gilna P."/>
            <person name="Schmutz J."/>
            <person name="Larimer F."/>
            <person name="Land M."/>
            <person name="Kyrpides N.C."/>
            <person name="Mavromatis K."/>
            <person name="Richardson P."/>
            <person name="Rohde M."/>
            <person name="Goeker M."/>
            <person name="Klenk H.P."/>
            <person name="Zhang Y."/>
            <person name="Roberts G.P."/>
            <person name="Reslewic S."/>
            <person name="Schwartz D.C."/>
        </authorList>
    </citation>
    <scope>NUCLEOTIDE SEQUENCE [LARGE SCALE GENOMIC DNA]</scope>
    <source>
        <strain>ATCC 11170 / ATH 1.1.1 / DSM 467 / LMG 4362 / NCIMB 8255 / S1</strain>
    </source>
</reference>
<protein>
    <recommendedName>
        <fullName evidence="1">3-isopropylmalate dehydratase large subunit</fullName>
        <ecNumber evidence="1">4.2.1.33</ecNumber>
    </recommendedName>
    <alternativeName>
        <fullName evidence="1">Alpha-IPM isomerase</fullName>
        <shortName evidence="1">IPMI</shortName>
    </alternativeName>
    <alternativeName>
        <fullName evidence="1">Isopropylmalate isomerase</fullName>
    </alternativeName>
</protein>
<keyword id="KW-0004">4Fe-4S</keyword>
<keyword id="KW-0028">Amino-acid biosynthesis</keyword>
<keyword id="KW-0100">Branched-chain amino acid biosynthesis</keyword>
<keyword id="KW-0408">Iron</keyword>
<keyword id="KW-0411">Iron-sulfur</keyword>
<keyword id="KW-0432">Leucine biosynthesis</keyword>
<keyword id="KW-0456">Lyase</keyword>
<keyword id="KW-0479">Metal-binding</keyword>
<keyword id="KW-1185">Reference proteome</keyword>
<name>LEUC_RHORT</name>